<evidence type="ECO:0000255" key="1">
    <source>
        <dbReference type="HAMAP-Rule" id="MF_00383"/>
    </source>
</evidence>
<evidence type="ECO:0000255" key="2">
    <source>
        <dbReference type="PROSITE-ProRule" id="PRU00469"/>
    </source>
</evidence>
<evidence type="ECO:0007829" key="3">
    <source>
        <dbReference type="PDB" id="1PFT"/>
    </source>
</evidence>
<protein>
    <recommendedName>
        <fullName evidence="1">Transcription initiation factor IIB</fullName>
        <shortName evidence="1">TFIIB</shortName>
    </recommendedName>
</protein>
<reference key="1">
    <citation type="journal article" date="1996" name="J. Biol. Inorg. Chem.">
        <title>A transcription factor (TFIIB) homolog from the hyperthermophilic archaeon Pyrococcus furiosus binds Zn or Fe in an N-terminal Cys4 motif.</title>
        <authorList>
            <person name="Zeng Q."/>
            <person name="Lewis L.M."/>
            <person name="Colangelo C.M."/>
            <person name="Dong J."/>
            <person name="Scott R.A."/>
        </authorList>
    </citation>
    <scope>NUCLEOTIDE SEQUENCE [GENOMIC DNA]</scope>
</reference>
<reference key="2">
    <citation type="journal article" date="1999" name="Genetics">
        <title>Divergence of the hyperthermophilic archaea Pyrococcus furiosus and P. horikoshii inferred from complete genomic sequences.</title>
        <authorList>
            <person name="Maeder D.L."/>
            <person name="Weiss R.B."/>
            <person name="Dunn D.M."/>
            <person name="Cherry J.L."/>
            <person name="Gonzalez J.M."/>
            <person name="DiRuggiero J."/>
            <person name="Robb F.T."/>
        </authorList>
    </citation>
    <scope>NUCLEOTIDE SEQUENCE [LARGE SCALE GENOMIC DNA]</scope>
    <source>
        <strain>ATCC 43587 / DSM 3638 / JCM 8422 / Vc1</strain>
    </source>
</reference>
<reference key="3">
    <citation type="journal article" date="1996" name="Nat. Struct. Biol.">
        <title>The N-terminal domain of TFIIB from Pyrococcus furiosus forms a zinc ribbon.</title>
        <authorList>
            <person name="Zhu W."/>
            <person name="Zeng Q."/>
            <person name="Colangelo C.M."/>
            <person name="Lewis L.M."/>
            <person name="Summers M.F."/>
            <person name="Scott R.A."/>
        </authorList>
    </citation>
    <scope>STRUCTURE BY NMR OF 1-50</scope>
</reference>
<dbReference type="EMBL" id="U48391">
    <property type="protein sequence ID" value="AAC43724.1"/>
    <property type="molecule type" value="Genomic_DNA"/>
</dbReference>
<dbReference type="EMBL" id="AE009950">
    <property type="protein sequence ID" value="AAL81501.1"/>
    <property type="molecule type" value="Genomic_DNA"/>
</dbReference>
<dbReference type="PIR" id="T46883">
    <property type="entry name" value="T46883"/>
</dbReference>
<dbReference type="RefSeq" id="WP_011012524.1">
    <property type="nucleotide sequence ID" value="NZ_CP023154.1"/>
</dbReference>
<dbReference type="PDB" id="1PFT">
    <property type="method" value="NMR"/>
    <property type="chains" value="A=1-49"/>
</dbReference>
<dbReference type="PDBsum" id="1PFT"/>
<dbReference type="SMR" id="P61998"/>
<dbReference type="MINT" id="P61998"/>
<dbReference type="STRING" id="186497.PF1377"/>
<dbReference type="PaxDb" id="186497-PF1377"/>
<dbReference type="KEGG" id="pfu:PF1377"/>
<dbReference type="PATRIC" id="fig|186497.12.peg.1440"/>
<dbReference type="eggNOG" id="arCOG01981">
    <property type="taxonomic scope" value="Archaea"/>
</dbReference>
<dbReference type="HOGENOM" id="CLU_043736_0_1_2"/>
<dbReference type="OrthoDB" id="7429at2157"/>
<dbReference type="PhylomeDB" id="P61998"/>
<dbReference type="EvolutionaryTrace" id="P61998"/>
<dbReference type="Proteomes" id="UP000001013">
    <property type="component" value="Chromosome"/>
</dbReference>
<dbReference type="GO" id="GO:0097550">
    <property type="term" value="C:transcription preinitiation complex"/>
    <property type="evidence" value="ECO:0007669"/>
    <property type="project" value="TreeGrafter"/>
</dbReference>
<dbReference type="GO" id="GO:0003700">
    <property type="term" value="F:DNA-binding transcription factor activity"/>
    <property type="evidence" value="ECO:0007669"/>
    <property type="project" value="UniProtKB-UniRule"/>
</dbReference>
<dbReference type="GO" id="GO:0017025">
    <property type="term" value="F:TBP-class protein binding"/>
    <property type="evidence" value="ECO:0007669"/>
    <property type="project" value="InterPro"/>
</dbReference>
<dbReference type="GO" id="GO:0008270">
    <property type="term" value="F:zinc ion binding"/>
    <property type="evidence" value="ECO:0007669"/>
    <property type="project" value="UniProtKB-UniRule"/>
</dbReference>
<dbReference type="GO" id="GO:0070897">
    <property type="term" value="P:transcription preinitiation complex assembly"/>
    <property type="evidence" value="ECO:0007669"/>
    <property type="project" value="InterPro"/>
</dbReference>
<dbReference type="CDD" id="cd20549">
    <property type="entry name" value="CYCLIN_TFIIB_archaea_like_rpt1"/>
    <property type="match status" value="1"/>
</dbReference>
<dbReference type="CDD" id="cd20550">
    <property type="entry name" value="CYCLIN_TFIIB_archaea_like_rpt2"/>
    <property type="match status" value="1"/>
</dbReference>
<dbReference type="FunFam" id="1.10.472.10:FF:000023">
    <property type="entry name" value="Transcription initiation factor IIB"/>
    <property type="match status" value="1"/>
</dbReference>
<dbReference type="FunFam" id="1.10.472.170:FF:000001">
    <property type="entry name" value="Transcription initiation factor IIB"/>
    <property type="match status" value="1"/>
</dbReference>
<dbReference type="Gene3D" id="1.10.472.170">
    <property type="match status" value="1"/>
</dbReference>
<dbReference type="Gene3D" id="1.10.472.10">
    <property type="entry name" value="Cyclin-like"/>
    <property type="match status" value="1"/>
</dbReference>
<dbReference type="HAMAP" id="MF_00383">
    <property type="entry name" value="TF2B_arch"/>
    <property type="match status" value="1"/>
</dbReference>
<dbReference type="InterPro" id="IPR013763">
    <property type="entry name" value="Cyclin-like_dom"/>
</dbReference>
<dbReference type="InterPro" id="IPR036915">
    <property type="entry name" value="Cyclin-like_sf"/>
</dbReference>
<dbReference type="InterPro" id="IPR000812">
    <property type="entry name" value="TFIIB"/>
</dbReference>
<dbReference type="InterPro" id="IPR023484">
    <property type="entry name" value="TFIIB_arc"/>
</dbReference>
<dbReference type="InterPro" id="IPR023486">
    <property type="entry name" value="TFIIB_CS"/>
</dbReference>
<dbReference type="InterPro" id="IPR013150">
    <property type="entry name" value="TFIIB_cyclin"/>
</dbReference>
<dbReference type="InterPro" id="IPR013137">
    <property type="entry name" value="Znf_TFIIB"/>
</dbReference>
<dbReference type="NCBIfam" id="NF001658">
    <property type="entry name" value="PRK00423.1"/>
    <property type="match status" value="1"/>
</dbReference>
<dbReference type="PANTHER" id="PTHR11618:SF13">
    <property type="entry name" value="TRANSCRIPTION INITIATION FACTOR IIB"/>
    <property type="match status" value="1"/>
</dbReference>
<dbReference type="PANTHER" id="PTHR11618">
    <property type="entry name" value="TRANSCRIPTION INITIATION FACTOR IIB-RELATED"/>
    <property type="match status" value="1"/>
</dbReference>
<dbReference type="Pfam" id="PF00382">
    <property type="entry name" value="TFIIB"/>
    <property type="match status" value="2"/>
</dbReference>
<dbReference type="Pfam" id="PF08271">
    <property type="entry name" value="Zn_Ribbon_TF"/>
    <property type="match status" value="1"/>
</dbReference>
<dbReference type="PRINTS" id="PR00685">
    <property type="entry name" value="TIFACTORIIB"/>
</dbReference>
<dbReference type="SMART" id="SM00385">
    <property type="entry name" value="CYCLIN"/>
    <property type="match status" value="2"/>
</dbReference>
<dbReference type="SUPFAM" id="SSF47954">
    <property type="entry name" value="Cyclin-like"/>
    <property type="match status" value="2"/>
</dbReference>
<dbReference type="SUPFAM" id="SSF57783">
    <property type="entry name" value="Zinc beta-ribbon"/>
    <property type="match status" value="1"/>
</dbReference>
<dbReference type="PROSITE" id="PS00782">
    <property type="entry name" value="TFIIB"/>
    <property type="match status" value="2"/>
</dbReference>
<dbReference type="PROSITE" id="PS51134">
    <property type="entry name" value="ZF_TFIIB"/>
    <property type="match status" value="1"/>
</dbReference>
<sequence>MNKQKVCPACESAELIYDPERGEIVCAKCGYVIEENIIDMGPEWRAFDASQRERRSRTGAPESILLHDKGLSTEIGIDRSLSGLMREKMYRLRKWQSRLRVSDAAERNLAFALSELDRITAQLKLPRHVEEEAARLYREAVRKGLIRGRSIESVMAACVYAACRLLKVPRTLDEIADIARVDKKEIGRSYRFIARNLNLTPKKLFVKPTDYVNKFADELGLSEKVRRRAIEILDEAYKRGLTSGKSPAGLVAAALYIASLLEGEKRTQREVAEVARVTEVTVRNRYKELVEKLKIKVPIA</sequence>
<proteinExistence type="evidence at protein level"/>
<gene>
    <name evidence="1" type="primary">tfb</name>
    <name type="ordered locus">PF1377</name>
</gene>
<name>TF2B_PYRFU</name>
<feature type="chain" id="PRO_0000119327" description="Transcription initiation factor IIB">
    <location>
        <begin position="1"/>
        <end position="300"/>
    </location>
</feature>
<feature type="repeat" description="1">
    <location>
        <begin position="114"/>
        <end position="197"/>
    </location>
</feature>
<feature type="repeat" description="2">
    <location>
        <begin position="210"/>
        <end position="291"/>
    </location>
</feature>
<feature type="zinc finger region" description="TFIIB-type" evidence="2">
    <location>
        <begin position="2"/>
        <end position="34"/>
    </location>
</feature>
<feature type="binding site" evidence="2">
    <location>
        <position position="7"/>
    </location>
    <ligand>
        <name>Zn(2+)</name>
        <dbReference type="ChEBI" id="CHEBI:29105"/>
    </ligand>
</feature>
<feature type="binding site" evidence="2">
    <location>
        <position position="10"/>
    </location>
    <ligand>
        <name>Zn(2+)</name>
        <dbReference type="ChEBI" id="CHEBI:29105"/>
    </ligand>
</feature>
<feature type="binding site" evidence="2">
    <location>
        <position position="26"/>
    </location>
    <ligand>
        <name>Zn(2+)</name>
        <dbReference type="ChEBI" id="CHEBI:29105"/>
    </ligand>
</feature>
<feature type="binding site" evidence="2">
    <location>
        <position position="29"/>
    </location>
    <ligand>
        <name>Zn(2+)</name>
        <dbReference type="ChEBI" id="CHEBI:29105"/>
    </ligand>
</feature>
<feature type="turn" evidence="3">
    <location>
        <begin position="8"/>
        <end position="10"/>
    </location>
</feature>
<feature type="strand" evidence="3">
    <location>
        <begin position="15"/>
        <end position="18"/>
    </location>
</feature>
<feature type="turn" evidence="3">
    <location>
        <begin position="19"/>
        <end position="22"/>
    </location>
</feature>
<feature type="strand" evidence="3">
    <location>
        <begin position="23"/>
        <end position="29"/>
    </location>
</feature>
<feature type="strand" evidence="3">
    <location>
        <begin position="42"/>
        <end position="45"/>
    </location>
</feature>
<organism>
    <name type="scientific">Pyrococcus furiosus (strain ATCC 43587 / DSM 3638 / JCM 8422 / Vc1)</name>
    <dbReference type="NCBI Taxonomy" id="186497"/>
    <lineage>
        <taxon>Archaea</taxon>
        <taxon>Methanobacteriati</taxon>
        <taxon>Methanobacteriota</taxon>
        <taxon>Thermococci</taxon>
        <taxon>Thermococcales</taxon>
        <taxon>Thermococcaceae</taxon>
        <taxon>Pyrococcus</taxon>
    </lineage>
</organism>
<keyword id="KW-0002">3D-structure</keyword>
<keyword id="KW-0479">Metal-binding</keyword>
<keyword id="KW-1185">Reference proteome</keyword>
<keyword id="KW-0677">Repeat</keyword>
<keyword id="KW-0804">Transcription</keyword>
<keyword id="KW-0805">Transcription regulation</keyword>
<keyword id="KW-0862">Zinc</keyword>
<keyword id="KW-0863">Zinc-finger</keyword>
<comment type="function">
    <text>Stabilizes TBP binding to an archaeal box-A promoter. Also responsible for recruiting RNA polymerase II to the pre-initiation complex (DNA-TBP-TFIIB).</text>
</comment>
<comment type="similarity">
    <text evidence="1">Belongs to the TFIIB family.</text>
</comment>
<accession>P61998</accession>
<accession>P29095</accession>
<accession>Q51731</accession>